<evidence type="ECO:0000250" key="1"/>
<evidence type="ECO:0000305" key="2"/>
<feature type="chain" id="PRO_0000128326" description="T-complex protein 1 subunit gamma">
    <location>
        <begin position="1"/>
        <end position="558"/>
    </location>
</feature>
<feature type="disulfide bond" evidence="1">
    <location>
        <begin position="381"/>
        <end position="387"/>
    </location>
</feature>
<name>TCPG_THAWE</name>
<reference key="1">
    <citation type="submission" date="2000-06" db="EMBL/GenBank/DDBJ databases">
        <title>Structural features of nuclear genes in the centric diatom Thalassiosira weissflogii (Bacillariophyceae).</title>
        <authorList>
            <person name="Armbrust V."/>
        </authorList>
    </citation>
    <scope>NUCLEOTIDE SEQUENCE [MRNA]</scope>
</reference>
<sequence>MANQGMGPIMVLNSKTQRSTGRQAQLGNIQAARAVADIIRSTLGPRSMLKMLLDPMGGIVITNDGNCILREVDVSHPTAKSMIELSRAHDEEVGDGTTSVIILAGEMLINAEPFVRTNIHPTIIVRGYNYALQEALTICEEWALVVDVHDSERVKSLVQSCIGAKFSSRWNDIMIDMALKAVLTVSRESRTPSFTPEANDVYAQKMEVDIKRYAKVEKIPGGEISDCAVLSGVMFNKDVTHSKMRRRIENPRILLLDTPLEYKKGESQTNVEITDEEDWNTLLKMEEEYVENMCMEIIAFKPDIVITEKGVSDLAQHYFAKANITAFRRLRKTDNNRVARATGATIVSRTDEIRESDIGTGCGLFEMRKIGEEYFAFFEECKDPKACTIILRGGSKDVLNEIERNLTDAMQVVRNVVFDPRLLPGGGATEMAVSVGLRKAGLKLEGIQQGPFLAVGDAMEVIPRTLAQNCGVSVIRTVTQLRAKHAAAYEDSETSGNGTFPKCNWGIDGTTGKLVDMEEFGVWEPFSVKVQTIKTAVESACMILRIDDIVSGSKKKGY</sequence>
<accession>Q9LKI7</accession>
<organism>
    <name type="scientific">Thalassiosira weissflogii</name>
    <name type="common">Marine diatom</name>
    <dbReference type="NCBI Taxonomy" id="1577725"/>
    <lineage>
        <taxon>Eukaryota</taxon>
        <taxon>Sar</taxon>
        <taxon>Stramenopiles</taxon>
        <taxon>Ochrophyta</taxon>
        <taxon>Bacillariophyta</taxon>
        <taxon>Coscinodiscophyceae</taxon>
        <taxon>Thalassiosirophycidae</taxon>
        <taxon>Thalassiosirales</taxon>
        <taxon>Thalassiosiraceae</taxon>
        <taxon>Conticribra</taxon>
    </lineage>
</organism>
<protein>
    <recommendedName>
        <fullName>T-complex protein 1 subunit gamma</fullName>
        <shortName>TCP-1-gamma</shortName>
    </recommendedName>
    <alternativeName>
        <fullName>CCT-gamma</fullName>
    </alternativeName>
</protein>
<comment type="function">
    <text evidence="1">Molecular chaperone; assists the folding of proteins upon ATP hydrolysis. Known to play a role, in vitro, in the folding of actin and tubulin (By similarity).</text>
</comment>
<comment type="subunit">
    <text evidence="1">Heterooligomeric complex of about 850 to 900 kDa that forms two stacked rings, 12 to 16 nm in diameter.</text>
</comment>
<comment type="subcellular location">
    <subcellularLocation>
        <location evidence="1">Cytoplasm</location>
    </subcellularLocation>
</comment>
<comment type="similarity">
    <text evidence="2">Belongs to the TCP-1 chaperonin family.</text>
</comment>
<dbReference type="EMBL" id="AF276909">
    <property type="protein sequence ID" value="AAF81907.1"/>
    <property type="molecule type" value="mRNA"/>
</dbReference>
<dbReference type="SMR" id="Q9LKI7"/>
<dbReference type="GO" id="GO:0005832">
    <property type="term" value="C:chaperonin-containing T-complex"/>
    <property type="evidence" value="ECO:0007669"/>
    <property type="project" value="UniProtKB-ARBA"/>
</dbReference>
<dbReference type="GO" id="GO:0005524">
    <property type="term" value="F:ATP binding"/>
    <property type="evidence" value="ECO:0007669"/>
    <property type="project" value="UniProtKB-KW"/>
</dbReference>
<dbReference type="GO" id="GO:0016887">
    <property type="term" value="F:ATP hydrolysis activity"/>
    <property type="evidence" value="ECO:0007669"/>
    <property type="project" value="InterPro"/>
</dbReference>
<dbReference type="GO" id="GO:0140662">
    <property type="term" value="F:ATP-dependent protein folding chaperone"/>
    <property type="evidence" value="ECO:0007669"/>
    <property type="project" value="InterPro"/>
</dbReference>
<dbReference type="GO" id="GO:0051082">
    <property type="term" value="F:unfolded protein binding"/>
    <property type="evidence" value="ECO:0007669"/>
    <property type="project" value="InterPro"/>
</dbReference>
<dbReference type="CDD" id="cd03337">
    <property type="entry name" value="TCP1_gamma"/>
    <property type="match status" value="1"/>
</dbReference>
<dbReference type="FunFam" id="1.10.560.10:FF:000085">
    <property type="entry name" value="T-complex protein 1 subunit gamma"/>
    <property type="match status" value="1"/>
</dbReference>
<dbReference type="FunFam" id="3.50.7.10:FF:000005">
    <property type="entry name" value="T-complex protein 1 subunit gamma"/>
    <property type="match status" value="1"/>
</dbReference>
<dbReference type="Gene3D" id="3.50.7.10">
    <property type="entry name" value="GroEL"/>
    <property type="match status" value="1"/>
</dbReference>
<dbReference type="Gene3D" id="1.10.560.10">
    <property type="entry name" value="GroEL-like equatorial domain"/>
    <property type="match status" value="1"/>
</dbReference>
<dbReference type="Gene3D" id="3.30.260.10">
    <property type="entry name" value="TCP-1-like chaperonin intermediate domain"/>
    <property type="match status" value="1"/>
</dbReference>
<dbReference type="InterPro" id="IPR012719">
    <property type="entry name" value="Chap_CCT_gamma"/>
</dbReference>
<dbReference type="InterPro" id="IPR017998">
    <property type="entry name" value="Chaperone_TCP-1"/>
</dbReference>
<dbReference type="InterPro" id="IPR002194">
    <property type="entry name" value="Chaperonin_TCP-1_CS"/>
</dbReference>
<dbReference type="InterPro" id="IPR002423">
    <property type="entry name" value="Cpn60/GroEL/TCP-1"/>
</dbReference>
<dbReference type="InterPro" id="IPR027409">
    <property type="entry name" value="GroEL-like_apical_dom_sf"/>
</dbReference>
<dbReference type="InterPro" id="IPR027413">
    <property type="entry name" value="GROEL-like_equatorial_sf"/>
</dbReference>
<dbReference type="InterPro" id="IPR027410">
    <property type="entry name" value="TCP-1-like_intermed_sf"/>
</dbReference>
<dbReference type="InterPro" id="IPR053374">
    <property type="entry name" value="TCP-1_chaperonin"/>
</dbReference>
<dbReference type="InterPro" id="IPR054827">
    <property type="entry name" value="thermosome_alpha"/>
</dbReference>
<dbReference type="NCBIfam" id="TIGR02344">
    <property type="entry name" value="chap_CCT_gamma"/>
    <property type="match status" value="1"/>
</dbReference>
<dbReference type="NCBIfam" id="NF041082">
    <property type="entry name" value="thermosome_alpha"/>
    <property type="match status" value="1"/>
</dbReference>
<dbReference type="NCBIfam" id="NF041083">
    <property type="entry name" value="thermosome_beta"/>
    <property type="match status" value="1"/>
</dbReference>
<dbReference type="PANTHER" id="PTHR11353">
    <property type="entry name" value="CHAPERONIN"/>
    <property type="match status" value="1"/>
</dbReference>
<dbReference type="Pfam" id="PF00118">
    <property type="entry name" value="Cpn60_TCP1"/>
    <property type="match status" value="1"/>
</dbReference>
<dbReference type="PRINTS" id="PR00304">
    <property type="entry name" value="TCOMPLEXTCP1"/>
</dbReference>
<dbReference type="SUPFAM" id="SSF52029">
    <property type="entry name" value="GroEL apical domain-like"/>
    <property type="match status" value="1"/>
</dbReference>
<dbReference type="SUPFAM" id="SSF48592">
    <property type="entry name" value="GroEL equatorial domain-like"/>
    <property type="match status" value="1"/>
</dbReference>
<dbReference type="SUPFAM" id="SSF54849">
    <property type="entry name" value="GroEL-intermediate domain like"/>
    <property type="match status" value="1"/>
</dbReference>
<dbReference type="PROSITE" id="PS00750">
    <property type="entry name" value="TCP1_1"/>
    <property type="match status" value="1"/>
</dbReference>
<dbReference type="PROSITE" id="PS00751">
    <property type="entry name" value="TCP1_2"/>
    <property type="match status" value="1"/>
</dbReference>
<proteinExistence type="evidence at transcript level"/>
<keyword id="KW-0067">ATP-binding</keyword>
<keyword id="KW-0143">Chaperone</keyword>
<keyword id="KW-0963">Cytoplasm</keyword>
<keyword id="KW-1015">Disulfide bond</keyword>
<keyword id="KW-0547">Nucleotide-binding</keyword>